<feature type="chain" id="PRO_0000445343" description="26S proteasome non-ATPase regulatory subunit 4 homolog">
    <location>
        <begin position="1"/>
        <end position="402"/>
    </location>
</feature>
<feature type="domain" description="VWFA" evidence="3">
    <location>
        <begin position="5"/>
        <end position="189"/>
    </location>
</feature>
<feature type="domain" description="UIM 1" evidence="2">
    <location>
        <begin position="221"/>
        <end position="240"/>
    </location>
</feature>
<feature type="domain" description="UIM 2" evidence="2">
    <location>
        <begin position="291"/>
        <end position="310"/>
    </location>
</feature>
<feature type="domain" description="UIM 3" evidence="2">
    <location>
        <begin position="323"/>
        <end position="342"/>
    </location>
</feature>
<feature type="region of interest" description="Disordered" evidence="4">
    <location>
        <begin position="241"/>
        <end position="292"/>
    </location>
</feature>
<feature type="region of interest" description="Disordered" evidence="4">
    <location>
        <begin position="302"/>
        <end position="321"/>
    </location>
</feature>
<feature type="region of interest" description="Disordered" evidence="4">
    <location>
        <begin position="363"/>
        <end position="402"/>
    </location>
</feature>
<feature type="compositionally biased region" description="Basic and acidic residues" evidence="4">
    <location>
        <begin position="241"/>
        <end position="261"/>
    </location>
</feature>
<feature type="compositionally biased region" description="Basic and acidic residues" evidence="4">
    <location>
        <begin position="385"/>
        <end position="402"/>
    </location>
</feature>
<keyword id="KW-0647">Proteasome</keyword>
<keyword id="KW-1185">Reference proteome</keyword>
<keyword id="KW-0677">Repeat</keyword>
<sequence length="402" mass="42383">MVLEATMICIDNSEWMRNGDYSPSRFQAQADAVNLICGAKTQSNPENTVGVMTMAGKGVRVLVTPTSDLGKILACMHGLEVGAEANLAAAIQVAQLALKHRQNKRQQQRIIAFIGSPVKYDKKVLETIGKKLKKNNVALDIVDFGETDDDKPEKLEALISAVNSSDSSHIVHVPPGENALSDVLISTPIFTGEEGGSGFAASAAAAAATGAAGFEFDVDPNVDPELALALRLSMEEERARQEAIAKKAAEESSGAENKDHASSSNADSVMAEAEPASNAADDKKDQPKEDDDAQLLQQALAMSMEEGSSGAAAADAAMAEAAVDDQDLALALQMSVQDAGGSSQSDMSKVFEDRSFVTSILNSLPGVDPNDPSVKDLLASLHGQGEQEKKEDKSDKPEDEKK</sequence>
<protein>
    <recommendedName>
        <fullName evidence="9">26S proteasome non-ATPase regulatory subunit 4 homolog</fullName>
    </recommendedName>
    <alternativeName>
        <fullName evidence="7">26S proteasome regulatory subunit RPN10</fullName>
        <shortName evidence="7">OsRPN10</shortName>
    </alternativeName>
    <alternativeName>
        <fullName evidence="8">26S proteasome regulatory subunit S5a homolog</fullName>
        <shortName evidence="8">OsS5a</shortName>
    </alternativeName>
</protein>
<name>PSMDA_ORYSJ</name>
<dbReference type="EMBL" id="AB010740">
    <property type="protein sequence ID" value="BAA32704.1"/>
    <property type="molecule type" value="mRNA"/>
</dbReference>
<dbReference type="EMBL" id="AB037151">
    <property type="protein sequence ID" value="BAB78488.1"/>
    <property type="molecule type" value="mRNA"/>
</dbReference>
<dbReference type="EMBL" id="JX972162">
    <property type="protein sequence ID" value="AGT38456.1"/>
    <property type="molecule type" value="mRNA"/>
</dbReference>
<dbReference type="EMBL" id="DP000009">
    <property type="protein sequence ID" value="ABF94915.1"/>
    <property type="molecule type" value="Genomic_DNA"/>
</dbReference>
<dbReference type="EMBL" id="DP000009">
    <property type="protein sequence ID" value="ABF94916.1"/>
    <property type="molecule type" value="Genomic_DNA"/>
</dbReference>
<dbReference type="EMBL" id="AP008209">
    <property type="protein sequence ID" value="BAF11441.1"/>
    <property type="molecule type" value="Genomic_DNA"/>
</dbReference>
<dbReference type="EMBL" id="AP014959">
    <property type="protein sequence ID" value="BAS83212.1"/>
    <property type="molecule type" value="Genomic_DNA"/>
</dbReference>
<dbReference type="EMBL" id="CM000140">
    <property type="protein sequence ID" value="EEE58678.1"/>
    <property type="molecule type" value="Genomic_DNA"/>
</dbReference>
<dbReference type="EMBL" id="AK073601">
    <property type="protein sequence ID" value="BAG93544.1"/>
    <property type="molecule type" value="mRNA"/>
</dbReference>
<dbReference type="PIR" id="T51606">
    <property type="entry name" value="T51606"/>
</dbReference>
<dbReference type="SMR" id="O82143"/>
<dbReference type="FunCoup" id="O82143">
    <property type="interactions" value="3337"/>
</dbReference>
<dbReference type="STRING" id="39947.O82143"/>
<dbReference type="iPTMnet" id="O82143"/>
<dbReference type="PaxDb" id="39947-O82143"/>
<dbReference type="EnsemblPlants" id="Os03t0243300-01">
    <property type="protein sequence ID" value="Os03t0243300-01"/>
    <property type="gene ID" value="Os03g0243300"/>
</dbReference>
<dbReference type="Gramene" id="Os03t0243300-01">
    <property type="protein sequence ID" value="Os03t0243300-01"/>
    <property type="gene ID" value="Os03g0243300"/>
</dbReference>
<dbReference type="KEGG" id="dosa:Os03g0243300"/>
<dbReference type="KEGG" id="osa:4332222"/>
<dbReference type="eggNOG" id="KOG2884">
    <property type="taxonomic scope" value="Eukaryota"/>
</dbReference>
<dbReference type="HOGENOM" id="CLU_033293_0_0_1"/>
<dbReference type="InParanoid" id="O82143"/>
<dbReference type="OMA" id="RIVIFNC"/>
<dbReference type="OrthoDB" id="1731724at2759"/>
<dbReference type="Proteomes" id="UP000000763">
    <property type="component" value="Chromosome 3"/>
</dbReference>
<dbReference type="Proteomes" id="UP000007752">
    <property type="component" value="Chromosome 3"/>
</dbReference>
<dbReference type="Proteomes" id="UP000059680">
    <property type="component" value="Chromosome 3"/>
</dbReference>
<dbReference type="GO" id="GO:0005829">
    <property type="term" value="C:cytosol"/>
    <property type="evidence" value="ECO:0000318"/>
    <property type="project" value="GO_Central"/>
</dbReference>
<dbReference type="GO" id="GO:0005634">
    <property type="term" value="C:nucleus"/>
    <property type="evidence" value="ECO:0000318"/>
    <property type="project" value="GO_Central"/>
</dbReference>
<dbReference type="GO" id="GO:0008540">
    <property type="term" value="C:proteasome regulatory particle, base subcomplex"/>
    <property type="evidence" value="ECO:0000314"/>
    <property type="project" value="UniProtKB"/>
</dbReference>
<dbReference type="GO" id="GO:0031593">
    <property type="term" value="F:polyubiquitin modification-dependent protein binding"/>
    <property type="evidence" value="ECO:0000318"/>
    <property type="project" value="GO_Central"/>
</dbReference>
<dbReference type="GO" id="GO:0043161">
    <property type="term" value="P:proteasome-mediated ubiquitin-dependent protein catabolic process"/>
    <property type="evidence" value="ECO:0000318"/>
    <property type="project" value="GO_Central"/>
</dbReference>
<dbReference type="CDD" id="cd22297">
    <property type="entry name" value="PSMD4_RAZUL"/>
    <property type="match status" value="1"/>
</dbReference>
<dbReference type="CDD" id="cd01452">
    <property type="entry name" value="VWA_26S_proteasome_subunit"/>
    <property type="match status" value="1"/>
</dbReference>
<dbReference type="FunFam" id="3.40.50.410:FF:000005">
    <property type="entry name" value="26S proteasome non-ATPase regulatory subunit 4"/>
    <property type="match status" value="1"/>
</dbReference>
<dbReference type="FunFam" id="1.10.287.3990:FF:000002">
    <property type="entry name" value="26S proteasome non-ATPase regulatory subunit 4 homolog"/>
    <property type="match status" value="1"/>
</dbReference>
<dbReference type="Gene3D" id="1.10.287.3990">
    <property type="match status" value="1"/>
</dbReference>
<dbReference type="Gene3D" id="3.40.50.410">
    <property type="entry name" value="von Willebrand factor, type A domain"/>
    <property type="match status" value="1"/>
</dbReference>
<dbReference type="InterPro" id="IPR027040">
    <property type="entry name" value="PSMD4"/>
</dbReference>
<dbReference type="InterPro" id="IPR049590">
    <property type="entry name" value="PSMD4_RAZUL-like"/>
</dbReference>
<dbReference type="InterPro" id="IPR003903">
    <property type="entry name" value="UIM_dom"/>
</dbReference>
<dbReference type="InterPro" id="IPR002035">
    <property type="entry name" value="VWF_A"/>
</dbReference>
<dbReference type="InterPro" id="IPR036465">
    <property type="entry name" value="vWFA_dom_sf"/>
</dbReference>
<dbReference type="PANTHER" id="PTHR10223">
    <property type="entry name" value="26S PROTEASOME NON-ATPASE REGULATORY SUBUNIT 4"/>
    <property type="match status" value="1"/>
</dbReference>
<dbReference type="PANTHER" id="PTHR10223:SF0">
    <property type="entry name" value="26S PROTEASOME NON-ATPASE REGULATORY SUBUNIT 4"/>
    <property type="match status" value="1"/>
</dbReference>
<dbReference type="Pfam" id="PF02809">
    <property type="entry name" value="UIM"/>
    <property type="match status" value="3"/>
</dbReference>
<dbReference type="Pfam" id="PF13519">
    <property type="entry name" value="VWA_2"/>
    <property type="match status" value="1"/>
</dbReference>
<dbReference type="SMART" id="SM00726">
    <property type="entry name" value="UIM"/>
    <property type="match status" value="3"/>
</dbReference>
<dbReference type="SMART" id="SM00327">
    <property type="entry name" value="VWA"/>
    <property type="match status" value="1"/>
</dbReference>
<dbReference type="SUPFAM" id="SSF53300">
    <property type="entry name" value="vWA-like"/>
    <property type="match status" value="1"/>
</dbReference>
<dbReference type="PROSITE" id="PS50330">
    <property type="entry name" value="UIM"/>
    <property type="match status" value="3"/>
</dbReference>
<dbReference type="PROSITE" id="PS50234">
    <property type="entry name" value="VWFA"/>
    <property type="match status" value="1"/>
</dbReference>
<reference key="1">
    <citation type="journal article" date="1998" name="Plant Biotechnol.">
        <title>Cloning and sequencing of cDNA from Oryza sativa encoding a homolog to non-ATPase subunit, MBP1, of 26S proteasome in Arabidopsis thaliana.</title>
        <authorList>
            <person name="Yanagawa Y."/>
            <person name="Ueda T."/>
            <person name="Yamamoto K."/>
            <person name="Sasaki T."/>
            <person name="Tanaka K."/>
            <person name="Hashimoto J."/>
            <person name="Sato T."/>
            <person name="Nakagawa H."/>
        </authorList>
    </citation>
    <scope>NUCLEOTIDE SEQUENCE [MRNA]</scope>
    <source>
        <strain>cv. Nipponbare</strain>
        <tissue>Seedling</tissue>
    </source>
</reference>
<reference key="2">
    <citation type="journal article" date="2002" name="Eur. J. Biochem.">
        <title>Identification of the 19S regulatory particle subunits from the rice 26S proteasome.</title>
        <authorList>
            <person name="Shibahara T."/>
            <person name="Kawasaki H."/>
            <person name="Hirano H."/>
        </authorList>
    </citation>
    <scope>NUCLEOTIDE SEQUENCE [MRNA]</scope>
    <scope>IDENTIFICATION BY MASS SPECTROMETRY</scope>
    <scope>SUBUNIT</scope>
    <source>
        <strain>cv. Nipponbare</strain>
    </source>
</reference>
<reference key="3">
    <citation type="submission" date="2012-10" db="EMBL/GenBank/DDBJ databases">
        <title>Structural and expression analysis of immature seed genes in Oryza sativa L.</title>
        <authorList>
            <person name="Yoon U.H."/>
        </authorList>
    </citation>
    <scope>NUCLEOTIDE SEQUENCE [MRNA]</scope>
    <source>
        <strain>cv. Ilpoombyeo</strain>
        <tissue>Immature seed</tissue>
    </source>
</reference>
<reference key="4">
    <citation type="journal article" date="2005" name="Genome Res.">
        <title>Sequence, annotation, and analysis of synteny between rice chromosome 3 and diverged grass species.</title>
        <authorList>
            <consortium name="The rice chromosome 3 sequencing consortium"/>
            <person name="Buell C.R."/>
            <person name="Yuan Q."/>
            <person name="Ouyang S."/>
            <person name="Liu J."/>
            <person name="Zhu W."/>
            <person name="Wang A."/>
            <person name="Maiti R."/>
            <person name="Haas B."/>
            <person name="Wortman J."/>
            <person name="Pertea M."/>
            <person name="Jones K.M."/>
            <person name="Kim M."/>
            <person name="Overton L."/>
            <person name="Tsitrin T."/>
            <person name="Fadrosh D."/>
            <person name="Bera J."/>
            <person name="Weaver B."/>
            <person name="Jin S."/>
            <person name="Johri S."/>
            <person name="Reardon M."/>
            <person name="Webb K."/>
            <person name="Hill J."/>
            <person name="Moffat K."/>
            <person name="Tallon L."/>
            <person name="Van Aken S."/>
            <person name="Lewis M."/>
            <person name="Utterback T."/>
            <person name="Feldblyum T."/>
            <person name="Zismann V."/>
            <person name="Iobst S."/>
            <person name="Hsiao J."/>
            <person name="de Vazeille A.R."/>
            <person name="Salzberg S.L."/>
            <person name="White O."/>
            <person name="Fraser C.M."/>
            <person name="Yu Y."/>
            <person name="Kim H."/>
            <person name="Rambo T."/>
            <person name="Currie J."/>
            <person name="Collura K."/>
            <person name="Kernodle-Thompson S."/>
            <person name="Wei F."/>
            <person name="Kudrna K."/>
            <person name="Ammiraju J.S.S."/>
            <person name="Luo M."/>
            <person name="Goicoechea J.L."/>
            <person name="Wing R.A."/>
            <person name="Henry D."/>
            <person name="Oates R."/>
            <person name="Palmer M."/>
            <person name="Pries G."/>
            <person name="Saski C."/>
            <person name="Simmons J."/>
            <person name="Soderlund C."/>
            <person name="Nelson W."/>
            <person name="de la Bastide M."/>
            <person name="Spiegel L."/>
            <person name="Nascimento L."/>
            <person name="Huang E."/>
            <person name="Preston R."/>
            <person name="Zutavern T."/>
            <person name="Palmer L."/>
            <person name="O'Shaughnessy A."/>
            <person name="Dike S."/>
            <person name="McCombie W.R."/>
            <person name="Minx P."/>
            <person name="Cordum H."/>
            <person name="Wilson R."/>
            <person name="Jin W."/>
            <person name="Lee H.R."/>
            <person name="Jiang J."/>
            <person name="Jackson S."/>
        </authorList>
    </citation>
    <scope>NUCLEOTIDE SEQUENCE [LARGE SCALE GENOMIC DNA]</scope>
    <source>
        <strain>cv. Nipponbare</strain>
    </source>
</reference>
<reference key="5">
    <citation type="journal article" date="2005" name="Nature">
        <title>The map-based sequence of the rice genome.</title>
        <authorList>
            <consortium name="International rice genome sequencing project (IRGSP)"/>
        </authorList>
    </citation>
    <scope>NUCLEOTIDE SEQUENCE [LARGE SCALE GENOMIC DNA]</scope>
    <source>
        <strain>cv. Nipponbare</strain>
    </source>
</reference>
<reference key="6">
    <citation type="journal article" date="2008" name="Nucleic Acids Res.">
        <title>The rice annotation project database (RAP-DB): 2008 update.</title>
        <authorList>
            <consortium name="The rice annotation project (RAP)"/>
        </authorList>
    </citation>
    <scope>GENOME REANNOTATION</scope>
    <source>
        <strain>cv. Nipponbare</strain>
    </source>
</reference>
<reference key="7">
    <citation type="journal article" date="2013" name="Rice">
        <title>Improvement of the Oryza sativa Nipponbare reference genome using next generation sequence and optical map data.</title>
        <authorList>
            <person name="Kawahara Y."/>
            <person name="de la Bastide M."/>
            <person name="Hamilton J.P."/>
            <person name="Kanamori H."/>
            <person name="McCombie W.R."/>
            <person name="Ouyang S."/>
            <person name="Schwartz D.C."/>
            <person name="Tanaka T."/>
            <person name="Wu J."/>
            <person name="Zhou S."/>
            <person name="Childs K.L."/>
            <person name="Davidson R.M."/>
            <person name="Lin H."/>
            <person name="Quesada-Ocampo L."/>
            <person name="Vaillancourt B."/>
            <person name="Sakai H."/>
            <person name="Lee S.S."/>
            <person name="Kim J."/>
            <person name="Numa H."/>
            <person name="Itoh T."/>
            <person name="Buell C.R."/>
            <person name="Matsumoto T."/>
        </authorList>
    </citation>
    <scope>GENOME REANNOTATION</scope>
    <source>
        <strain>cv. Nipponbare</strain>
    </source>
</reference>
<reference key="8">
    <citation type="journal article" date="2005" name="PLoS Biol.">
        <title>The genomes of Oryza sativa: a history of duplications.</title>
        <authorList>
            <person name="Yu J."/>
            <person name="Wang J."/>
            <person name="Lin W."/>
            <person name="Li S."/>
            <person name="Li H."/>
            <person name="Zhou J."/>
            <person name="Ni P."/>
            <person name="Dong W."/>
            <person name="Hu S."/>
            <person name="Zeng C."/>
            <person name="Zhang J."/>
            <person name="Zhang Y."/>
            <person name="Li R."/>
            <person name="Xu Z."/>
            <person name="Li S."/>
            <person name="Li X."/>
            <person name="Zheng H."/>
            <person name="Cong L."/>
            <person name="Lin L."/>
            <person name="Yin J."/>
            <person name="Geng J."/>
            <person name="Li G."/>
            <person name="Shi J."/>
            <person name="Liu J."/>
            <person name="Lv H."/>
            <person name="Li J."/>
            <person name="Wang J."/>
            <person name="Deng Y."/>
            <person name="Ran L."/>
            <person name="Shi X."/>
            <person name="Wang X."/>
            <person name="Wu Q."/>
            <person name="Li C."/>
            <person name="Ren X."/>
            <person name="Wang J."/>
            <person name="Wang X."/>
            <person name="Li D."/>
            <person name="Liu D."/>
            <person name="Zhang X."/>
            <person name="Ji Z."/>
            <person name="Zhao W."/>
            <person name="Sun Y."/>
            <person name="Zhang Z."/>
            <person name="Bao J."/>
            <person name="Han Y."/>
            <person name="Dong L."/>
            <person name="Ji J."/>
            <person name="Chen P."/>
            <person name="Wu S."/>
            <person name="Liu J."/>
            <person name="Xiao Y."/>
            <person name="Bu D."/>
            <person name="Tan J."/>
            <person name="Yang L."/>
            <person name="Ye C."/>
            <person name="Zhang J."/>
            <person name="Xu J."/>
            <person name="Zhou Y."/>
            <person name="Yu Y."/>
            <person name="Zhang B."/>
            <person name="Zhuang S."/>
            <person name="Wei H."/>
            <person name="Liu B."/>
            <person name="Lei M."/>
            <person name="Yu H."/>
            <person name="Li Y."/>
            <person name="Xu H."/>
            <person name="Wei S."/>
            <person name="He X."/>
            <person name="Fang L."/>
            <person name="Zhang Z."/>
            <person name="Zhang Y."/>
            <person name="Huang X."/>
            <person name="Su Z."/>
            <person name="Tong W."/>
            <person name="Li J."/>
            <person name="Tong Z."/>
            <person name="Li S."/>
            <person name="Ye J."/>
            <person name="Wang L."/>
            <person name="Fang L."/>
            <person name="Lei T."/>
            <person name="Chen C.-S."/>
            <person name="Chen H.-C."/>
            <person name="Xu Z."/>
            <person name="Li H."/>
            <person name="Huang H."/>
            <person name="Zhang F."/>
            <person name="Xu H."/>
            <person name="Li N."/>
            <person name="Zhao C."/>
            <person name="Li S."/>
            <person name="Dong L."/>
            <person name="Huang Y."/>
            <person name="Li L."/>
            <person name="Xi Y."/>
            <person name="Qi Q."/>
            <person name="Li W."/>
            <person name="Zhang B."/>
            <person name="Hu W."/>
            <person name="Zhang Y."/>
            <person name="Tian X."/>
            <person name="Jiao Y."/>
            <person name="Liang X."/>
            <person name="Jin J."/>
            <person name="Gao L."/>
            <person name="Zheng W."/>
            <person name="Hao B."/>
            <person name="Liu S.-M."/>
            <person name="Wang W."/>
            <person name="Yuan L."/>
            <person name="Cao M."/>
            <person name="McDermott J."/>
            <person name="Samudrala R."/>
            <person name="Wang J."/>
            <person name="Wong G.K.-S."/>
            <person name="Yang H."/>
        </authorList>
    </citation>
    <scope>NUCLEOTIDE SEQUENCE [LARGE SCALE GENOMIC DNA]</scope>
    <source>
        <strain>cv. Nipponbare</strain>
    </source>
</reference>
<reference key="9">
    <citation type="journal article" date="2003" name="Science">
        <title>Collection, mapping, and annotation of over 28,000 cDNA clones from japonica rice.</title>
        <authorList>
            <consortium name="The rice full-length cDNA consortium"/>
        </authorList>
    </citation>
    <scope>NUCLEOTIDE SEQUENCE [LARGE SCALE MRNA]</scope>
    <source>
        <strain>cv. Nipponbare</strain>
    </source>
</reference>
<reference key="10">
    <citation type="journal article" date="2017" name="Plant Cell">
        <title>OsFTIP1-mediated regulation of florigen transport in rice is negatively regulated by the ubiquitin-like domain kinase OsUbDKgamma4.</title>
        <authorList>
            <person name="Song S."/>
            <person name="Chen Y."/>
            <person name="Liu L."/>
            <person name="Wang Y."/>
            <person name="Bao S."/>
            <person name="Zhou X."/>
            <person name="Teo Z.W."/>
            <person name="Mao C."/>
            <person name="Gan Y."/>
            <person name="Yu H."/>
        </authorList>
    </citation>
    <scope>INTERACTION WITH PI4KG4</scope>
</reference>
<gene>
    <name evidence="7" type="primary">RPN10</name>
    <name evidence="11" type="ordered locus">Os03g0243300</name>
    <name evidence="10" type="ordered locus">LOC_Os03g13970</name>
    <name evidence="13" type="ORF">OsJ_10104</name>
    <name evidence="12" type="ORF">OSNPB_030243300</name>
</gene>
<organism>
    <name type="scientific">Oryza sativa subsp. japonica</name>
    <name type="common">Rice</name>
    <dbReference type="NCBI Taxonomy" id="39947"/>
    <lineage>
        <taxon>Eukaryota</taxon>
        <taxon>Viridiplantae</taxon>
        <taxon>Streptophyta</taxon>
        <taxon>Embryophyta</taxon>
        <taxon>Tracheophyta</taxon>
        <taxon>Spermatophyta</taxon>
        <taxon>Magnoliopsida</taxon>
        <taxon>Liliopsida</taxon>
        <taxon>Poales</taxon>
        <taxon>Poaceae</taxon>
        <taxon>BOP clade</taxon>
        <taxon>Oryzoideae</taxon>
        <taxon>Oryzeae</taxon>
        <taxon>Oryzinae</taxon>
        <taxon>Oryza</taxon>
        <taxon>Oryza sativa</taxon>
    </lineage>
</organism>
<evidence type="ECO:0000250" key="1">
    <source>
        <dbReference type="UniProtKB" id="P55034"/>
    </source>
</evidence>
<evidence type="ECO:0000255" key="2">
    <source>
        <dbReference type="PROSITE-ProRule" id="PRU00213"/>
    </source>
</evidence>
<evidence type="ECO:0000255" key="3">
    <source>
        <dbReference type="PROSITE-ProRule" id="PRU00219"/>
    </source>
</evidence>
<evidence type="ECO:0000256" key="4">
    <source>
        <dbReference type="SAM" id="MobiDB-lite"/>
    </source>
</evidence>
<evidence type="ECO:0000269" key="5">
    <source>
    </source>
</evidence>
<evidence type="ECO:0000269" key="6">
    <source>
    </source>
</evidence>
<evidence type="ECO:0000303" key="7">
    <source>
    </source>
</evidence>
<evidence type="ECO:0000303" key="8">
    <source ref="1"/>
</evidence>
<evidence type="ECO:0000305" key="9"/>
<evidence type="ECO:0000312" key="10">
    <source>
        <dbReference type="EMBL" id="ABF94915.1"/>
    </source>
</evidence>
<evidence type="ECO:0000312" key="11">
    <source>
        <dbReference type="EMBL" id="BAF11441.1"/>
    </source>
</evidence>
<evidence type="ECO:0000312" key="12">
    <source>
        <dbReference type="EMBL" id="BAS83212.1"/>
    </source>
</evidence>
<evidence type="ECO:0000312" key="13">
    <source>
        <dbReference type="EMBL" id="EEE58678.1"/>
    </source>
</evidence>
<proteinExistence type="evidence at protein level"/>
<comment type="function">
    <text evidence="1">Plays a role in maintaining the structural integrity of the 19S regulatory particle (RP), subcomplex of the 26S proteasome. Plays a major role in both the direct and indirect recognition of ubiquitinated substrates of ubiquitin/26S proteasome-mediated proteolysis (UPP). Binds and presumably selects ubiquitin-conjugates for destruction.</text>
</comment>
<comment type="subunit">
    <text evidence="5 6">Component of the 19S regulatory particle (RP/PA700) base subcomplex of the 26S proteasome. The 26S proteasome is composed of a core protease (CP), known as the 20S proteasome, capped at one or both ends by the 19S regulatory particle (RP/PA700). The RP/PA700 complex is composed of at least 17 different subunits in two subcomplexes, the base and the lid, which form the portions proximal and distal to the 20S proteolytic core, respectively (PubMed:11874462). Interacts with PI4KG4 (PubMed:28254780).</text>
</comment>
<comment type="similarity">
    <text evidence="9">Belongs to the proteasome subunit S5A family.</text>
</comment>
<accession>O82143</accession>